<comment type="function">
    <text evidence="1">Part of the outer membrane protein assembly complex, which is involved in assembly and insertion of beta-barrel proteins into the outer membrane.</text>
</comment>
<comment type="subunit">
    <text evidence="1">Part of the Bam complex.</text>
</comment>
<comment type="subcellular location">
    <subcellularLocation>
        <location evidence="1">Cell outer membrane</location>
    </subcellularLocation>
</comment>
<comment type="similarity">
    <text evidence="1">Belongs to the BamC family.</text>
</comment>
<evidence type="ECO:0000255" key="1">
    <source>
        <dbReference type="HAMAP-Rule" id="MF_00924"/>
    </source>
</evidence>
<feature type="signal peptide" evidence="1">
    <location>
        <begin position="1"/>
        <end position="22"/>
    </location>
</feature>
<feature type="chain" id="PRO_0000417819" description="Outer membrane protein assembly factor BamC">
    <location>
        <begin position="23"/>
        <end position="322"/>
    </location>
</feature>
<sequence length="322" mass="35683">MISLLAVAVLAGCSNPETRSQANRGFDYEQETLRTAPLLIPEGLQAPRFNTEYVIPKGTAQGVTGKVLDIRPPTQVLPLVRGSEAMTEGSGLWFYQQRLDQPLERELNQALTVFFEQTDTDYDAVANGFESSGDAIGAPSQQFRWQLMPDAVRRAVAVQVQSTEGGGVLAQDRLRAEASMLNAFSLSYQRELSRQQELLDQGPIALTLDAGQGLLLAEQDYDRTWKRLITLLPRLGFDISNRQQALGYVDVEFDGLSKGDWQDLRLPALDIPEQEYRIQLGDLGSRTSLSLSNKDREPVAADVLSKLVNTLAPAFERTDLVR</sequence>
<keyword id="KW-0998">Cell outer membrane</keyword>
<keyword id="KW-0472">Membrane</keyword>
<keyword id="KW-1185">Reference proteome</keyword>
<keyword id="KW-0732">Signal</keyword>
<name>BAMC_OCESG</name>
<protein>
    <recommendedName>
        <fullName evidence="1">Outer membrane protein assembly factor BamC</fullName>
    </recommendedName>
</protein>
<proteinExistence type="inferred from homology"/>
<reference key="1">
    <citation type="journal article" date="2012" name="J. Bacteriol.">
        <title>Complete genome sequence of Oceanimonas sp. GK1, a halotolerant bacterium from Gavkhouni Wetland in Iran.</title>
        <authorList>
            <person name="Parsa Yeganeh L."/>
            <person name="Azarbaijani R."/>
            <person name="Sarikhan S."/>
            <person name="Mousavi H."/>
            <person name="Ramezani M."/>
            <person name="Amoozegar M.A."/>
            <person name="Shahzadeh Fazeli A."/>
            <person name="Salekdeh G.H."/>
        </authorList>
    </citation>
    <scope>NUCLEOTIDE SEQUENCE [LARGE SCALE GENOMIC DNA]</scope>
    <source>
        <strain>GK1 / IBRC-M 10197</strain>
    </source>
</reference>
<accession>H2FU77</accession>
<dbReference type="EMBL" id="CP003171">
    <property type="protein sequence ID" value="AEY01444.1"/>
    <property type="molecule type" value="Genomic_DNA"/>
</dbReference>
<dbReference type="RefSeq" id="WP_014292165.1">
    <property type="nucleotide sequence ID" value="NC_016745.1"/>
</dbReference>
<dbReference type="STRING" id="511062.GU3_08440"/>
<dbReference type="KEGG" id="oce:GU3_08440"/>
<dbReference type="eggNOG" id="COG3317">
    <property type="taxonomic scope" value="Bacteria"/>
</dbReference>
<dbReference type="HOGENOM" id="CLU_063217_0_0_6"/>
<dbReference type="OrthoDB" id="5598420at2"/>
<dbReference type="Proteomes" id="UP000007742">
    <property type="component" value="Chromosome"/>
</dbReference>
<dbReference type="GO" id="GO:0009279">
    <property type="term" value="C:cell outer membrane"/>
    <property type="evidence" value="ECO:0007669"/>
    <property type="project" value="UniProtKB-SubCell"/>
</dbReference>
<dbReference type="GO" id="GO:0043165">
    <property type="term" value="P:Gram-negative-bacterium-type cell outer membrane assembly"/>
    <property type="evidence" value="ECO:0007669"/>
    <property type="project" value="UniProtKB-UniRule"/>
</dbReference>
<dbReference type="GO" id="GO:0051205">
    <property type="term" value="P:protein insertion into membrane"/>
    <property type="evidence" value="ECO:0007669"/>
    <property type="project" value="UniProtKB-UniRule"/>
</dbReference>
<dbReference type="Gene3D" id="3.30.310.170">
    <property type="entry name" value="Outer membrane protein assembly factor BamC"/>
    <property type="match status" value="1"/>
</dbReference>
<dbReference type="HAMAP" id="MF_00924">
    <property type="entry name" value="OM_assembly_BamC"/>
    <property type="match status" value="1"/>
</dbReference>
<dbReference type="InterPro" id="IPR014524">
    <property type="entry name" value="BamC"/>
</dbReference>
<dbReference type="InterPro" id="IPR042268">
    <property type="entry name" value="BamC_C"/>
</dbReference>
<dbReference type="InterPro" id="IPR010653">
    <property type="entry name" value="NlpB/DapX"/>
</dbReference>
<dbReference type="Pfam" id="PF06804">
    <property type="entry name" value="Lipoprotein_18"/>
    <property type="match status" value="1"/>
</dbReference>
<gene>
    <name evidence="1" type="primary">bamC</name>
    <name type="ordered locus">GU3_08440</name>
</gene>
<organism>
    <name type="scientific">Oceanimonas sp. (strain GK1 / IBRC-M 10197)</name>
    <dbReference type="NCBI Taxonomy" id="511062"/>
    <lineage>
        <taxon>Bacteria</taxon>
        <taxon>Pseudomonadati</taxon>
        <taxon>Pseudomonadota</taxon>
        <taxon>Gammaproteobacteria</taxon>
        <taxon>Aeromonadales</taxon>
        <taxon>Aeromonadaceae</taxon>
        <taxon>Oceanimonas</taxon>
    </lineage>
</organism>